<proteinExistence type="inferred from homology"/>
<comment type="catalytic activity">
    <reaction evidence="1">
        <text>uridine + ATP = UMP + ADP + H(+)</text>
        <dbReference type="Rhea" id="RHEA:16825"/>
        <dbReference type="ChEBI" id="CHEBI:15378"/>
        <dbReference type="ChEBI" id="CHEBI:16704"/>
        <dbReference type="ChEBI" id="CHEBI:30616"/>
        <dbReference type="ChEBI" id="CHEBI:57865"/>
        <dbReference type="ChEBI" id="CHEBI:456216"/>
        <dbReference type="EC" id="2.7.1.48"/>
    </reaction>
</comment>
<comment type="catalytic activity">
    <reaction evidence="1">
        <text>cytidine + ATP = CMP + ADP + H(+)</text>
        <dbReference type="Rhea" id="RHEA:24674"/>
        <dbReference type="ChEBI" id="CHEBI:15378"/>
        <dbReference type="ChEBI" id="CHEBI:17562"/>
        <dbReference type="ChEBI" id="CHEBI:30616"/>
        <dbReference type="ChEBI" id="CHEBI:60377"/>
        <dbReference type="ChEBI" id="CHEBI:456216"/>
        <dbReference type="EC" id="2.7.1.48"/>
    </reaction>
</comment>
<comment type="pathway">
    <text evidence="1">Pyrimidine metabolism; CTP biosynthesis via salvage pathway; CTP from cytidine: step 1/3.</text>
</comment>
<comment type="pathway">
    <text evidence="1">Pyrimidine metabolism; UMP biosynthesis via salvage pathway; UMP from uridine: step 1/1.</text>
</comment>
<comment type="subcellular location">
    <subcellularLocation>
        <location evidence="1">Cytoplasm</location>
    </subcellularLocation>
</comment>
<comment type="similarity">
    <text evidence="1">Belongs to the uridine kinase family.</text>
</comment>
<comment type="sequence caution" evidence="2">
    <conflict type="erroneous initiation">
        <sequence resource="EMBL-CDS" id="AAG19586"/>
    </conflict>
</comment>
<name>URK_HALSA</name>
<protein>
    <recommendedName>
        <fullName evidence="1">Uridine kinase</fullName>
        <ecNumber evidence="1">2.7.1.48</ecNumber>
    </recommendedName>
    <alternativeName>
        <fullName evidence="1">Cytidine monophosphokinase</fullName>
    </alternativeName>
    <alternativeName>
        <fullName evidence="1">Uridine monophosphokinase</fullName>
    </alternativeName>
</protein>
<accession>Q9HQC9</accession>
<reference key="1">
    <citation type="journal article" date="2000" name="Proc. Natl. Acad. Sci. U.S.A.">
        <title>Genome sequence of Halobacterium species NRC-1.</title>
        <authorList>
            <person name="Ng W.V."/>
            <person name="Kennedy S.P."/>
            <person name="Mahairas G.G."/>
            <person name="Berquist B."/>
            <person name="Pan M."/>
            <person name="Shukla H.D."/>
            <person name="Lasky S.R."/>
            <person name="Baliga N.S."/>
            <person name="Thorsson V."/>
            <person name="Sbrogna J."/>
            <person name="Swartzell S."/>
            <person name="Weir D."/>
            <person name="Hall J."/>
            <person name="Dahl T.A."/>
            <person name="Welti R."/>
            <person name="Goo Y.A."/>
            <person name="Leithauser B."/>
            <person name="Keller K."/>
            <person name="Cruz R."/>
            <person name="Danson M.J."/>
            <person name="Hough D.W."/>
            <person name="Maddocks D.G."/>
            <person name="Jablonski P.E."/>
            <person name="Krebs M.P."/>
            <person name="Angevine C.M."/>
            <person name="Dale H."/>
            <person name="Isenbarger T.A."/>
            <person name="Peck R.F."/>
            <person name="Pohlschroder M."/>
            <person name="Spudich J.L."/>
            <person name="Jung K.-H."/>
            <person name="Alam M."/>
            <person name="Freitas T."/>
            <person name="Hou S."/>
            <person name="Daniels C.J."/>
            <person name="Dennis P.P."/>
            <person name="Omer A.D."/>
            <person name="Ebhardt H."/>
            <person name="Lowe T.M."/>
            <person name="Liang P."/>
            <person name="Riley M."/>
            <person name="Hood L."/>
            <person name="DasSarma S."/>
        </authorList>
    </citation>
    <scope>NUCLEOTIDE SEQUENCE [LARGE SCALE GENOMIC DNA]</scope>
    <source>
        <strain>ATCC 700922 / JCM 11081 / NRC-1</strain>
    </source>
</reference>
<dbReference type="EC" id="2.7.1.48" evidence="1"/>
<dbReference type="EMBL" id="AE004437">
    <property type="protein sequence ID" value="AAG19586.1"/>
    <property type="status" value="ALT_INIT"/>
    <property type="molecule type" value="Genomic_DNA"/>
</dbReference>
<dbReference type="PIR" id="F84277">
    <property type="entry name" value="F84277"/>
</dbReference>
<dbReference type="RefSeq" id="WP_012289294.1">
    <property type="nucleotide sequence ID" value="NC_002607.1"/>
</dbReference>
<dbReference type="SMR" id="Q9HQC9"/>
<dbReference type="STRING" id="64091.VNG_1219G"/>
<dbReference type="PaxDb" id="64091-VNG_1219G"/>
<dbReference type="GeneID" id="68693986"/>
<dbReference type="KEGG" id="hal:VNG_1219G"/>
<dbReference type="PATRIC" id="fig|64091.14.peg.934"/>
<dbReference type="HOGENOM" id="CLU_021278_1_0_2"/>
<dbReference type="InParanoid" id="Q9HQC9"/>
<dbReference type="OrthoDB" id="51389at2157"/>
<dbReference type="PhylomeDB" id="Q9HQC9"/>
<dbReference type="UniPathway" id="UPA00574">
    <property type="reaction ID" value="UER00637"/>
</dbReference>
<dbReference type="UniPathway" id="UPA00579">
    <property type="reaction ID" value="UER00640"/>
</dbReference>
<dbReference type="Proteomes" id="UP000000554">
    <property type="component" value="Chromosome"/>
</dbReference>
<dbReference type="GO" id="GO:0005737">
    <property type="term" value="C:cytoplasm"/>
    <property type="evidence" value="ECO:0000318"/>
    <property type="project" value="GO_Central"/>
</dbReference>
<dbReference type="GO" id="GO:0005524">
    <property type="term" value="F:ATP binding"/>
    <property type="evidence" value="ECO:0007669"/>
    <property type="project" value="UniProtKB-UniRule"/>
</dbReference>
<dbReference type="GO" id="GO:0043771">
    <property type="term" value="F:cytidine kinase activity"/>
    <property type="evidence" value="ECO:0007669"/>
    <property type="project" value="RHEA"/>
</dbReference>
<dbReference type="GO" id="GO:0004849">
    <property type="term" value="F:uridine kinase activity"/>
    <property type="evidence" value="ECO:0007669"/>
    <property type="project" value="UniProtKB-UniRule"/>
</dbReference>
<dbReference type="GO" id="GO:0044211">
    <property type="term" value="P:CTP salvage"/>
    <property type="evidence" value="ECO:0007669"/>
    <property type="project" value="UniProtKB-UniRule"/>
</dbReference>
<dbReference type="GO" id="GO:0044206">
    <property type="term" value="P:UMP salvage"/>
    <property type="evidence" value="ECO:0007669"/>
    <property type="project" value="UniProtKB-UniRule"/>
</dbReference>
<dbReference type="CDD" id="cd02023">
    <property type="entry name" value="UMPK"/>
    <property type="match status" value="1"/>
</dbReference>
<dbReference type="Gene3D" id="3.40.50.300">
    <property type="entry name" value="P-loop containing nucleotide triphosphate hydrolases"/>
    <property type="match status" value="1"/>
</dbReference>
<dbReference type="HAMAP" id="MF_00551">
    <property type="entry name" value="Uridine_kinase"/>
    <property type="match status" value="1"/>
</dbReference>
<dbReference type="InterPro" id="IPR027417">
    <property type="entry name" value="P-loop_NTPase"/>
</dbReference>
<dbReference type="InterPro" id="IPR006083">
    <property type="entry name" value="PRK/URK"/>
</dbReference>
<dbReference type="InterPro" id="IPR026008">
    <property type="entry name" value="Uridine_kinase"/>
</dbReference>
<dbReference type="InterPro" id="IPR000764">
    <property type="entry name" value="Uridine_kinase-like"/>
</dbReference>
<dbReference type="NCBIfam" id="NF004018">
    <property type="entry name" value="PRK05480.1"/>
    <property type="match status" value="1"/>
</dbReference>
<dbReference type="NCBIfam" id="TIGR00235">
    <property type="entry name" value="udk"/>
    <property type="match status" value="1"/>
</dbReference>
<dbReference type="PANTHER" id="PTHR10285">
    <property type="entry name" value="URIDINE KINASE"/>
    <property type="match status" value="1"/>
</dbReference>
<dbReference type="Pfam" id="PF00485">
    <property type="entry name" value="PRK"/>
    <property type="match status" value="1"/>
</dbReference>
<dbReference type="PRINTS" id="PR00988">
    <property type="entry name" value="URIDINKINASE"/>
</dbReference>
<dbReference type="SUPFAM" id="SSF52540">
    <property type="entry name" value="P-loop containing nucleoside triphosphate hydrolases"/>
    <property type="match status" value="1"/>
</dbReference>
<sequence length="225" mass="25319">MTIPSFAIGIAGGTGAGKTTVAREITDNVGESATLIPLDNYYEDLSDRPFEERANANYDHPSAFEWELLRTHIDALLSGQSIEMPQYDFERHVRKADRVVVEPTDVIVLEGILALSDETVNDMLDLHIYVETDADVRILRRIERDVVERGRELEGVMDQYLSTVKPMHEQFIEPTKRHADIIIPEGANSVAVNLLEEKVQAETSEMTAWAARDDTAFEDATYNPQ</sequence>
<gene>
    <name evidence="1" type="primary">udk</name>
    <name type="ordered locus">VNG_1219G</name>
</gene>
<evidence type="ECO:0000255" key="1">
    <source>
        <dbReference type="HAMAP-Rule" id="MF_00551"/>
    </source>
</evidence>
<evidence type="ECO:0000305" key="2"/>
<feature type="chain" id="PRO_0000164511" description="Uridine kinase">
    <location>
        <begin position="1"/>
        <end position="225"/>
    </location>
</feature>
<feature type="binding site" evidence="1">
    <location>
        <begin position="12"/>
        <end position="19"/>
    </location>
    <ligand>
        <name>ATP</name>
        <dbReference type="ChEBI" id="CHEBI:30616"/>
    </ligand>
</feature>
<keyword id="KW-0067">ATP-binding</keyword>
<keyword id="KW-0963">Cytoplasm</keyword>
<keyword id="KW-0418">Kinase</keyword>
<keyword id="KW-0547">Nucleotide-binding</keyword>
<keyword id="KW-1185">Reference proteome</keyword>
<keyword id="KW-0808">Transferase</keyword>
<organism>
    <name type="scientific">Halobacterium salinarum (strain ATCC 700922 / JCM 11081 / NRC-1)</name>
    <name type="common">Halobacterium halobium</name>
    <dbReference type="NCBI Taxonomy" id="64091"/>
    <lineage>
        <taxon>Archaea</taxon>
        <taxon>Methanobacteriati</taxon>
        <taxon>Methanobacteriota</taxon>
        <taxon>Stenosarchaea group</taxon>
        <taxon>Halobacteria</taxon>
        <taxon>Halobacteriales</taxon>
        <taxon>Halobacteriaceae</taxon>
        <taxon>Halobacterium</taxon>
        <taxon>Halobacterium salinarum NRC-34001</taxon>
    </lineage>
</organism>